<comment type="function">
    <text evidence="1">Voltage-sensor protein present on the post-synaptic side of glutamatergic mossy fibers and granule cells in the cerebellum. Despite the presence of a voltage-sensor segment, does not form a functional ion channel and its precise role remains unclear. Undergoes both rapid and slow structural rearrangements in response to changes in voltage. Contains a zinc-binding site that can regulate the slow conformational transition.</text>
</comment>
<comment type="subunit">
    <text evidence="1">Homodimer; disulfide-linked.</text>
</comment>
<comment type="subcellular location">
    <subcellularLocation>
        <location evidence="1">Cell membrane</location>
        <topology evidence="3">Multi-pass membrane protein</topology>
    </subcellularLocation>
    <subcellularLocation>
        <location evidence="1">Cell projection</location>
        <location evidence="1">Dendrite</location>
    </subcellularLocation>
    <subcellularLocation>
        <location evidence="1">Perikaryon</location>
    </subcellularLocation>
    <text evidence="1">Present in the dendrites and soma of cerebellar granule neurons, but not in their axon.</text>
</comment>
<comment type="domain">
    <text evidence="1">The transmembrane segment S4 functions as a voltage-sensor and is characterized by a series of positively charged amino acids at every third position. Transplantation of the transmembrane segment S4 into HVCN1, generates a functional voltage-activated proton channel.</text>
</comment>
<comment type="domain">
    <text evidence="2">The coiled coil mediates homodimerization.</text>
</comment>
<comment type="sequence caution" evidence="6">
    <conflict type="erroneous initiation">
        <sequence resource="EMBL-CDS" id="BAB01597"/>
    </conflict>
</comment>
<gene>
    <name evidence="1" type="primary">TMEM266</name>
    <name evidence="5" type="ORF">EGM_20651</name>
    <name evidence="1" type="ORF">QccE-15063</name>
</gene>
<protein>
    <recommendedName>
        <fullName evidence="6">Transmembrane protein 266</fullName>
    </recommendedName>
</protein>
<sequence length="531" mass="58368">MALAASFNMTNPQPAIEGGISEVEIISQQVDEETKSIAPVQLVNFAYRDLPLAAVDLSTAGSQLLSNLDEDYQREGSNWLKPCCGKRAAVWQVFLLSASLNSFLVACVILVVILLTLELLIDIKLLQFSSAFQFAGVIHWISLVILSVFFSETVLRIVVLGIWDYIENKIEVFDGAVIILSLAPMVASTVANGPRSPWDAISLIIMLRIWRVKRVIDAYVLPVKLEMEMVIQQYEKAKVIQDEQLERLTQICQEQGFEIRQLRAHLAQQDLDLAAEREAALQAPHVLSQPRSRFKVVEAGTWEEETAAESVVEELQPSQEAMVKDDMNSYISQYYNGPSSDSGVPDAAVCMVTTAAIDIHQPDISSDLFSLDMPLKLGGNGTGATSESASRSSVTRAQSDSSQTLGSSTDCSTAREEPSSEPGPSPLPLPPQQQVEEATVQDLLSSLSEDPCPSQRALDPAPLSRPSPAGSAQTSPELEHRVSLFNQKNQEGFTVFQIRPVIHFQPTVPVLEDKFRSLESKEQKLHRVPEA</sequence>
<reference key="1">
    <citation type="journal article" date="2011" name="Nat. Biotechnol.">
        <title>Genome sequencing and comparison of two nonhuman primate animal models, the cynomolgus and Chinese rhesus macaques.</title>
        <authorList>
            <person name="Yan G."/>
            <person name="Zhang G."/>
            <person name="Fang X."/>
            <person name="Zhang Y."/>
            <person name="Li C."/>
            <person name="Ling F."/>
            <person name="Cooper D.N."/>
            <person name="Li Q."/>
            <person name="Li Y."/>
            <person name="van Gool A.J."/>
            <person name="Du H."/>
            <person name="Chen J."/>
            <person name="Chen R."/>
            <person name="Zhang P."/>
            <person name="Huang Z."/>
            <person name="Thompson J.R."/>
            <person name="Meng Y."/>
            <person name="Bai Y."/>
            <person name="Wang J."/>
            <person name="Zhuo M."/>
            <person name="Wang T."/>
            <person name="Huang Y."/>
            <person name="Wei L."/>
            <person name="Li J."/>
            <person name="Wang Z."/>
            <person name="Hu H."/>
            <person name="Yang P."/>
            <person name="Le L."/>
            <person name="Stenson P.D."/>
            <person name="Li B."/>
            <person name="Liu X."/>
            <person name="Ball E.V."/>
            <person name="An N."/>
            <person name="Huang Q."/>
            <person name="Zhang Y."/>
            <person name="Fan W."/>
            <person name="Zhang X."/>
            <person name="Li Y."/>
            <person name="Wang W."/>
            <person name="Katze M.G."/>
            <person name="Su B."/>
            <person name="Nielsen R."/>
            <person name="Yang H."/>
            <person name="Wang J."/>
            <person name="Wang X."/>
            <person name="Wang J."/>
        </authorList>
    </citation>
    <scope>NUCLEOTIDE SEQUENCE [LARGE SCALE GENOMIC DNA]</scope>
</reference>
<reference key="2">
    <citation type="journal article" date="2001" name="Gene">
        <title>Assignment of 118 novel cDNAs of cynomolgus monkey brain to human chromosomes.</title>
        <authorList>
            <person name="Osada N."/>
            <person name="Hida M."/>
            <person name="Kususda J."/>
            <person name="Tanuma R."/>
            <person name="Iseki K."/>
            <person name="Hirata M."/>
            <person name="Suto Y."/>
            <person name="Hirai M."/>
            <person name="Terao K."/>
            <person name="Suzuki Y."/>
            <person name="Sugano S."/>
            <person name="Hashimoto K."/>
        </authorList>
    </citation>
    <scope>NUCLEOTIDE SEQUENCE [LARGE SCALE MRNA] OF 114-531</scope>
    <source>
        <tissue>Brain cortex</tissue>
    </source>
</reference>
<reference key="3">
    <citation type="journal article" date="2001" name="Gene">
        <authorList>
            <person name="Osada N."/>
            <person name="Hida M."/>
            <person name="Kusuda J."/>
            <person name="Tanuma R."/>
            <person name="Iseki K."/>
            <person name="Hirata M."/>
            <person name="Suto Y."/>
            <person name="Hirai M."/>
            <person name="Terao K."/>
            <person name="Suzuki Y."/>
            <person name="Sugano S."/>
            <person name="Hashimoto K."/>
            <person name="Kususda J."/>
        </authorList>
    </citation>
    <scope>ERRATUM OF PUBMED:11574149</scope>
</reference>
<feature type="chain" id="PRO_0000244095" description="Transmembrane protein 266">
    <location>
        <begin position="1"/>
        <end position="531"/>
    </location>
</feature>
<feature type="topological domain" description="Cytoplasmic" evidence="6">
    <location>
        <begin position="1"/>
        <end position="102"/>
    </location>
</feature>
<feature type="transmembrane region" description="Helical; Name=Segment S1" evidence="3">
    <location>
        <begin position="103"/>
        <end position="123"/>
    </location>
</feature>
<feature type="topological domain" description="Extracellular" evidence="6">
    <location>
        <begin position="124"/>
        <end position="129"/>
    </location>
</feature>
<feature type="transmembrane region" description="Helical; Name=Segment S2" evidence="3">
    <location>
        <begin position="130"/>
        <end position="150"/>
    </location>
</feature>
<feature type="topological domain" description="Cytoplasmic" evidence="6">
    <location>
        <begin position="151"/>
        <end position="169"/>
    </location>
</feature>
<feature type="transmembrane region" description="Helical; Name=Segment S3" evidence="3">
    <location>
        <begin position="170"/>
        <end position="190"/>
    </location>
</feature>
<feature type="topological domain" description="Extracellular" evidence="6">
    <location>
        <begin position="191"/>
        <end position="199"/>
    </location>
</feature>
<feature type="transmembrane region" description="Helical; Name=Segment S4" evidence="1">
    <location>
        <begin position="200"/>
        <end position="220"/>
    </location>
</feature>
<feature type="topological domain" description="Cytoplasmic" evidence="6">
    <location>
        <begin position="221"/>
        <end position="531"/>
    </location>
</feature>
<feature type="region of interest" description="Disordered" evidence="4">
    <location>
        <begin position="380"/>
        <end position="477"/>
    </location>
</feature>
<feature type="coiled-coil region" evidence="3">
    <location>
        <begin position="231"/>
        <end position="251"/>
    </location>
</feature>
<feature type="compositionally biased region" description="Polar residues" evidence="4">
    <location>
        <begin position="383"/>
        <end position="412"/>
    </location>
</feature>
<feature type="compositionally biased region" description="Pro residues" evidence="4">
    <location>
        <begin position="421"/>
        <end position="431"/>
    </location>
</feature>
<feature type="sequence conflict" description="In Ref. 2; BAB01597." ref="2">
    <original>T</original>
    <variation>M</variation>
    <location>
        <position position="404"/>
    </location>
</feature>
<organism>
    <name type="scientific">Macaca fascicularis</name>
    <name type="common">Crab-eating macaque</name>
    <name type="synonym">Cynomolgus monkey</name>
    <dbReference type="NCBI Taxonomy" id="9541"/>
    <lineage>
        <taxon>Eukaryota</taxon>
        <taxon>Metazoa</taxon>
        <taxon>Chordata</taxon>
        <taxon>Craniata</taxon>
        <taxon>Vertebrata</taxon>
        <taxon>Euteleostomi</taxon>
        <taxon>Mammalia</taxon>
        <taxon>Eutheria</taxon>
        <taxon>Euarchontoglires</taxon>
        <taxon>Primates</taxon>
        <taxon>Haplorrhini</taxon>
        <taxon>Catarrhini</taxon>
        <taxon>Cercopithecidae</taxon>
        <taxon>Cercopithecinae</taxon>
        <taxon>Macaca</taxon>
    </lineage>
</organism>
<accession>Q9N0B5</accession>
<accession>G8F4X6</accession>
<proteinExistence type="evidence at transcript level"/>
<name>TM266_MACFA</name>
<evidence type="ECO:0000250" key="1">
    <source>
        <dbReference type="UniProtKB" id="Q2M3C6"/>
    </source>
</evidence>
<evidence type="ECO:0000250" key="2">
    <source>
        <dbReference type="UniProtKB" id="Q8BZB3"/>
    </source>
</evidence>
<evidence type="ECO:0000255" key="3"/>
<evidence type="ECO:0000256" key="4">
    <source>
        <dbReference type="SAM" id="MobiDB-lite"/>
    </source>
</evidence>
<evidence type="ECO:0000303" key="5">
    <source>
    </source>
</evidence>
<evidence type="ECO:0000305" key="6"/>
<keyword id="KW-1003">Cell membrane</keyword>
<keyword id="KW-0966">Cell projection</keyword>
<keyword id="KW-0175">Coiled coil</keyword>
<keyword id="KW-1015">Disulfide bond</keyword>
<keyword id="KW-0472">Membrane</keyword>
<keyword id="KW-1185">Reference proteome</keyword>
<keyword id="KW-0812">Transmembrane</keyword>
<keyword id="KW-1133">Transmembrane helix</keyword>
<dbReference type="EMBL" id="JH331148">
    <property type="protein sequence ID" value="EHH62340.1"/>
    <property type="molecule type" value="Genomic_DNA"/>
</dbReference>
<dbReference type="EMBL" id="AQIA01063333">
    <property type="status" value="NOT_ANNOTATED_CDS"/>
    <property type="molecule type" value="Genomic_DNA"/>
</dbReference>
<dbReference type="EMBL" id="AB046015">
    <property type="protein sequence ID" value="BAB01597.1"/>
    <property type="status" value="ALT_INIT"/>
    <property type="molecule type" value="mRNA"/>
</dbReference>
<dbReference type="RefSeq" id="XP_005560206.1">
    <property type="nucleotide sequence ID" value="XM_005560149.4"/>
</dbReference>
<dbReference type="RefSeq" id="XP_015308606.1">
    <property type="nucleotide sequence ID" value="XM_015453120.1"/>
</dbReference>
<dbReference type="RefSeq" id="XP_015308607.1">
    <property type="nucleotide sequence ID" value="XM_015453121.3"/>
</dbReference>
<dbReference type="RefSeq" id="XP_015308608.1">
    <property type="nucleotide sequence ID" value="XM_015453122.1"/>
</dbReference>
<dbReference type="RefSeq" id="XP_065404295.1">
    <property type="nucleotide sequence ID" value="XM_065548223.1"/>
</dbReference>
<dbReference type="RefSeq" id="XP_065404296.1">
    <property type="nucleotide sequence ID" value="XM_065548224.1"/>
</dbReference>
<dbReference type="STRING" id="9541.ENSMFAP00000013057"/>
<dbReference type="GeneID" id="101926642"/>
<dbReference type="CTD" id="123591"/>
<dbReference type="VEuPathDB" id="HostDB:ENSMFAG00000027682"/>
<dbReference type="eggNOG" id="ENOG502QRI0">
    <property type="taxonomic scope" value="Eukaryota"/>
</dbReference>
<dbReference type="OMA" id="FQFATII"/>
<dbReference type="OrthoDB" id="14737at314294"/>
<dbReference type="Proteomes" id="UP000009130">
    <property type="component" value="Unassembled WGS sequence"/>
</dbReference>
<dbReference type="Proteomes" id="UP000233100">
    <property type="component" value="Chromosome 7"/>
</dbReference>
<dbReference type="GO" id="GO:0030425">
    <property type="term" value="C:dendrite"/>
    <property type="evidence" value="ECO:0000250"/>
    <property type="project" value="UniProtKB"/>
</dbReference>
<dbReference type="GO" id="GO:0043204">
    <property type="term" value="C:perikaryon"/>
    <property type="evidence" value="ECO:0007669"/>
    <property type="project" value="UniProtKB-SubCell"/>
</dbReference>
<dbReference type="GO" id="GO:0005886">
    <property type="term" value="C:plasma membrane"/>
    <property type="evidence" value="ECO:0000250"/>
    <property type="project" value="UniProtKB"/>
</dbReference>
<dbReference type="GO" id="GO:0042803">
    <property type="term" value="F:protein homodimerization activity"/>
    <property type="evidence" value="ECO:0000250"/>
    <property type="project" value="UniProtKB"/>
</dbReference>
<dbReference type="FunFam" id="1.20.120.350:FF:000041">
    <property type="entry name" value="Transmembrane protein 266"/>
    <property type="match status" value="1"/>
</dbReference>
<dbReference type="Gene3D" id="1.20.120.350">
    <property type="entry name" value="Voltage-gated potassium channels. Chain C"/>
    <property type="match status" value="1"/>
</dbReference>
<dbReference type="InterPro" id="IPR042857">
    <property type="entry name" value="TMEM266"/>
</dbReference>
<dbReference type="InterPro" id="IPR027359">
    <property type="entry name" value="Volt_channel_dom_sf"/>
</dbReference>
<dbReference type="PANTHER" id="PTHR46842">
    <property type="entry name" value="TRANSMEMBRANE PROTEIN 266"/>
    <property type="match status" value="1"/>
</dbReference>
<dbReference type="PANTHER" id="PTHR46842:SF1">
    <property type="entry name" value="TRANSMEMBRANE PROTEIN 266"/>
    <property type="match status" value="1"/>
</dbReference>
<dbReference type="SUPFAM" id="SSF81324">
    <property type="entry name" value="Voltage-gated potassium channels"/>
    <property type="match status" value="1"/>
</dbReference>